<reference key="1">
    <citation type="journal article" date="2004" name="J. Bacteriol.">
        <title>Complete genome sequence of the genetically tractable hydrogenotrophic methanogen Methanococcus maripaludis.</title>
        <authorList>
            <person name="Hendrickson E.L."/>
            <person name="Kaul R."/>
            <person name="Zhou Y."/>
            <person name="Bovee D."/>
            <person name="Chapman P."/>
            <person name="Chung J."/>
            <person name="Conway de Macario E."/>
            <person name="Dodsworth J.A."/>
            <person name="Gillett W."/>
            <person name="Graham D.E."/>
            <person name="Hackett M."/>
            <person name="Haydock A.K."/>
            <person name="Kang A."/>
            <person name="Land M.L."/>
            <person name="Levy R."/>
            <person name="Lie T.J."/>
            <person name="Major T.A."/>
            <person name="Moore B.C."/>
            <person name="Porat I."/>
            <person name="Palmeiri A."/>
            <person name="Rouse G."/>
            <person name="Saenphimmachak C."/>
            <person name="Soell D."/>
            <person name="Van Dien S."/>
            <person name="Wang T."/>
            <person name="Whitman W.B."/>
            <person name="Xia Q."/>
            <person name="Zhang Y."/>
            <person name="Larimer F.W."/>
            <person name="Olson M.V."/>
            <person name="Leigh J.A."/>
        </authorList>
    </citation>
    <scope>NUCLEOTIDE SEQUENCE [LARGE SCALE GENOMIC DNA]</scope>
    <source>
        <strain>DSM 14266 / JCM 13030 / NBRC 101832 / S2 / LL</strain>
    </source>
</reference>
<comment type="function">
    <text evidence="1">One of two assembly initiator proteins, it binds directly to the 5'-end of the 23S rRNA, where it nucleates assembly of the 50S subunit.</text>
</comment>
<comment type="function">
    <text evidence="1">Located at the polypeptide exit tunnel on the outside of the subunit.</text>
</comment>
<comment type="subunit">
    <text evidence="1">Part of the 50S ribosomal subunit.</text>
</comment>
<comment type="similarity">
    <text evidence="1">Belongs to the universal ribosomal protein uL24 family.</text>
</comment>
<accession>Q6LXE2</accession>
<gene>
    <name evidence="1" type="primary">rpl24</name>
    <name type="ordered locus">MMP1410</name>
</gene>
<protein>
    <recommendedName>
        <fullName evidence="1">Large ribosomal subunit protein uL24</fullName>
    </recommendedName>
    <alternativeName>
        <fullName evidence="2">50S ribosomal protein L24</fullName>
    </alternativeName>
</protein>
<dbReference type="EMBL" id="BX950229">
    <property type="protein sequence ID" value="CAF30966.1"/>
    <property type="molecule type" value="Genomic_DNA"/>
</dbReference>
<dbReference type="RefSeq" id="WP_011171354.1">
    <property type="nucleotide sequence ID" value="NC_005791.1"/>
</dbReference>
<dbReference type="SMR" id="Q6LXE2"/>
<dbReference type="STRING" id="267377.MMP1410"/>
<dbReference type="EnsemblBacteria" id="CAF30966">
    <property type="protein sequence ID" value="CAF30966"/>
    <property type="gene ID" value="MMP1410"/>
</dbReference>
<dbReference type="GeneID" id="37876003"/>
<dbReference type="KEGG" id="mmp:MMP1410"/>
<dbReference type="PATRIC" id="fig|267377.15.peg.1446"/>
<dbReference type="eggNOG" id="arCOG04094">
    <property type="taxonomic scope" value="Archaea"/>
</dbReference>
<dbReference type="HOGENOM" id="CLU_093240_2_1_2"/>
<dbReference type="OrthoDB" id="10899at2157"/>
<dbReference type="Proteomes" id="UP000000590">
    <property type="component" value="Chromosome"/>
</dbReference>
<dbReference type="GO" id="GO:0015934">
    <property type="term" value="C:large ribosomal subunit"/>
    <property type="evidence" value="ECO:0007669"/>
    <property type="project" value="InterPro"/>
</dbReference>
<dbReference type="GO" id="GO:0019843">
    <property type="term" value="F:rRNA binding"/>
    <property type="evidence" value="ECO:0007669"/>
    <property type="project" value="UniProtKB-UniRule"/>
</dbReference>
<dbReference type="GO" id="GO:0003735">
    <property type="term" value="F:structural constituent of ribosome"/>
    <property type="evidence" value="ECO:0007669"/>
    <property type="project" value="InterPro"/>
</dbReference>
<dbReference type="GO" id="GO:0006412">
    <property type="term" value="P:translation"/>
    <property type="evidence" value="ECO:0007669"/>
    <property type="project" value="UniProtKB-UniRule"/>
</dbReference>
<dbReference type="CDD" id="cd06089">
    <property type="entry name" value="KOW_RPL26"/>
    <property type="match status" value="1"/>
</dbReference>
<dbReference type="Gene3D" id="2.30.30.30">
    <property type="match status" value="1"/>
</dbReference>
<dbReference type="HAMAP" id="MF_01326_A">
    <property type="entry name" value="Ribosomal_uL24_A"/>
    <property type="match status" value="1"/>
</dbReference>
<dbReference type="InterPro" id="IPR005824">
    <property type="entry name" value="KOW"/>
</dbReference>
<dbReference type="InterPro" id="IPR014722">
    <property type="entry name" value="Rib_uL2_dom2"/>
</dbReference>
<dbReference type="InterPro" id="IPR005825">
    <property type="entry name" value="Ribosomal_uL24_CS"/>
</dbReference>
<dbReference type="InterPro" id="IPR005756">
    <property type="entry name" value="Ribosomal_uL24_euk/arc"/>
</dbReference>
<dbReference type="InterPro" id="IPR041988">
    <property type="entry name" value="Ribosomal_uL24_KOW"/>
</dbReference>
<dbReference type="InterPro" id="IPR008991">
    <property type="entry name" value="Translation_prot_SH3-like_sf"/>
</dbReference>
<dbReference type="NCBIfam" id="TIGR01080">
    <property type="entry name" value="rplX_A_E"/>
    <property type="match status" value="1"/>
</dbReference>
<dbReference type="PANTHER" id="PTHR11143">
    <property type="entry name" value="60S RIBOSOMAL PROTEIN L26 FAMILY MEMBER"/>
    <property type="match status" value="1"/>
</dbReference>
<dbReference type="Pfam" id="PF00467">
    <property type="entry name" value="KOW"/>
    <property type="match status" value="1"/>
</dbReference>
<dbReference type="Pfam" id="PF16906">
    <property type="entry name" value="Ribosomal_L26"/>
    <property type="match status" value="1"/>
</dbReference>
<dbReference type="SMART" id="SM00739">
    <property type="entry name" value="KOW"/>
    <property type="match status" value="1"/>
</dbReference>
<dbReference type="SUPFAM" id="SSF50104">
    <property type="entry name" value="Translation proteins SH3-like domain"/>
    <property type="match status" value="1"/>
</dbReference>
<dbReference type="PROSITE" id="PS01108">
    <property type="entry name" value="RIBOSOMAL_L24"/>
    <property type="match status" value="1"/>
</dbReference>
<organism>
    <name type="scientific">Methanococcus maripaludis (strain DSM 14266 / JCM 13030 / NBRC 101832 / S2 / LL)</name>
    <dbReference type="NCBI Taxonomy" id="267377"/>
    <lineage>
        <taxon>Archaea</taxon>
        <taxon>Methanobacteriati</taxon>
        <taxon>Methanobacteriota</taxon>
        <taxon>Methanomada group</taxon>
        <taxon>Methanococci</taxon>
        <taxon>Methanococcales</taxon>
        <taxon>Methanococcaceae</taxon>
        <taxon>Methanococcus</taxon>
    </lineage>
</organism>
<proteinExistence type="inferred from homology"/>
<sequence length="119" mass="13394">MVLTNSKQPRKQRKALYNAPLHLRNSVMSAMLAKELKEKYAKNSLPVKKGDTVKVLRGNFKGIEGEVSKVDYAGYKIIVEGVVNKKQDGNETAYPIHPSNVMITKLDESDEKRFKNSSN</sequence>
<name>RL24_METMP</name>
<keyword id="KW-1185">Reference proteome</keyword>
<keyword id="KW-0687">Ribonucleoprotein</keyword>
<keyword id="KW-0689">Ribosomal protein</keyword>
<keyword id="KW-0694">RNA-binding</keyword>
<keyword id="KW-0699">rRNA-binding</keyword>
<feature type="chain" id="PRO_0000241694" description="Large ribosomal subunit protein uL24">
    <location>
        <begin position="1"/>
        <end position="119"/>
    </location>
</feature>
<evidence type="ECO:0000255" key="1">
    <source>
        <dbReference type="HAMAP-Rule" id="MF_01326"/>
    </source>
</evidence>
<evidence type="ECO:0000305" key="2"/>